<protein>
    <recommendedName>
        <fullName evidence="1">Large ribosomal subunit protein uL4</fullName>
    </recommendedName>
    <alternativeName>
        <fullName evidence="3">50S ribosomal protein L4</fullName>
    </alternativeName>
</protein>
<comment type="function">
    <text evidence="1">One of the primary rRNA binding proteins, this protein initially binds near the 5'-end of the 23S rRNA. It is important during the early stages of 50S assembly. It makes multiple contacts with different domains of the 23S rRNA in the assembled 50S subunit and ribosome.</text>
</comment>
<comment type="function">
    <text evidence="1">Forms part of the polypeptide exit tunnel.</text>
</comment>
<comment type="subunit">
    <text evidence="1">Part of the 50S ribosomal subunit.</text>
</comment>
<comment type="similarity">
    <text evidence="1">Belongs to the universal ribosomal protein uL4 family.</text>
</comment>
<feature type="chain" id="PRO_0000242388" description="Large ribosomal subunit protein uL4">
    <location>
        <begin position="1"/>
        <end position="201"/>
    </location>
</feature>
<feature type="region of interest" description="Disordered" evidence="2">
    <location>
        <begin position="42"/>
        <end position="67"/>
    </location>
</feature>
<reference key="1">
    <citation type="journal article" date="2004" name="Nat. Genet.">
        <title>Evidence in the Legionella pneumophila genome for exploitation of host cell functions and high genome plasticity.</title>
        <authorList>
            <person name="Cazalet C."/>
            <person name="Rusniok C."/>
            <person name="Brueggemann H."/>
            <person name="Zidane N."/>
            <person name="Magnier A."/>
            <person name="Ma L."/>
            <person name="Tichit M."/>
            <person name="Jarraud S."/>
            <person name="Bouchier C."/>
            <person name="Vandenesch F."/>
            <person name="Kunst F."/>
            <person name="Etienne J."/>
            <person name="Glaser P."/>
            <person name="Buchrieser C."/>
        </authorList>
    </citation>
    <scope>NUCLEOTIDE SEQUENCE [LARGE SCALE GENOMIC DNA]</scope>
    <source>
        <strain>Paris</strain>
    </source>
</reference>
<organism>
    <name type="scientific">Legionella pneumophila (strain Paris)</name>
    <dbReference type="NCBI Taxonomy" id="297246"/>
    <lineage>
        <taxon>Bacteria</taxon>
        <taxon>Pseudomonadati</taxon>
        <taxon>Pseudomonadota</taxon>
        <taxon>Gammaproteobacteria</taxon>
        <taxon>Legionellales</taxon>
        <taxon>Legionellaceae</taxon>
        <taxon>Legionella</taxon>
    </lineage>
</organism>
<dbReference type="EMBL" id="CR628336">
    <property type="protein sequence ID" value="CAH11543.1"/>
    <property type="molecule type" value="Genomic_DNA"/>
</dbReference>
<dbReference type="RefSeq" id="WP_011213008.1">
    <property type="nucleotide sequence ID" value="NC_006368.1"/>
</dbReference>
<dbReference type="SMR" id="Q5X858"/>
<dbReference type="KEGG" id="lpp:lpp0395"/>
<dbReference type="LegioList" id="lpp0395"/>
<dbReference type="HOGENOM" id="CLU_041575_5_2_6"/>
<dbReference type="GO" id="GO:1990904">
    <property type="term" value="C:ribonucleoprotein complex"/>
    <property type="evidence" value="ECO:0007669"/>
    <property type="project" value="UniProtKB-KW"/>
</dbReference>
<dbReference type="GO" id="GO:0005840">
    <property type="term" value="C:ribosome"/>
    <property type="evidence" value="ECO:0007669"/>
    <property type="project" value="UniProtKB-KW"/>
</dbReference>
<dbReference type="GO" id="GO:0019843">
    <property type="term" value="F:rRNA binding"/>
    <property type="evidence" value="ECO:0007669"/>
    <property type="project" value="UniProtKB-UniRule"/>
</dbReference>
<dbReference type="GO" id="GO:0003735">
    <property type="term" value="F:structural constituent of ribosome"/>
    <property type="evidence" value="ECO:0007669"/>
    <property type="project" value="InterPro"/>
</dbReference>
<dbReference type="GO" id="GO:0006412">
    <property type="term" value="P:translation"/>
    <property type="evidence" value="ECO:0007669"/>
    <property type="project" value="UniProtKB-UniRule"/>
</dbReference>
<dbReference type="Gene3D" id="3.40.1370.10">
    <property type="match status" value="1"/>
</dbReference>
<dbReference type="HAMAP" id="MF_01328_B">
    <property type="entry name" value="Ribosomal_uL4_B"/>
    <property type="match status" value="1"/>
</dbReference>
<dbReference type="InterPro" id="IPR002136">
    <property type="entry name" value="Ribosomal_uL4"/>
</dbReference>
<dbReference type="InterPro" id="IPR013005">
    <property type="entry name" value="Ribosomal_uL4-like"/>
</dbReference>
<dbReference type="InterPro" id="IPR023574">
    <property type="entry name" value="Ribosomal_uL4_dom_sf"/>
</dbReference>
<dbReference type="NCBIfam" id="TIGR03953">
    <property type="entry name" value="rplD_bact"/>
    <property type="match status" value="1"/>
</dbReference>
<dbReference type="PANTHER" id="PTHR10746">
    <property type="entry name" value="50S RIBOSOMAL PROTEIN L4"/>
    <property type="match status" value="1"/>
</dbReference>
<dbReference type="PANTHER" id="PTHR10746:SF6">
    <property type="entry name" value="LARGE RIBOSOMAL SUBUNIT PROTEIN UL4M"/>
    <property type="match status" value="1"/>
</dbReference>
<dbReference type="Pfam" id="PF00573">
    <property type="entry name" value="Ribosomal_L4"/>
    <property type="match status" value="1"/>
</dbReference>
<dbReference type="SUPFAM" id="SSF52166">
    <property type="entry name" value="Ribosomal protein L4"/>
    <property type="match status" value="1"/>
</dbReference>
<proteinExistence type="inferred from homology"/>
<accession>Q5X858</accession>
<evidence type="ECO:0000255" key="1">
    <source>
        <dbReference type="HAMAP-Rule" id="MF_01328"/>
    </source>
</evidence>
<evidence type="ECO:0000256" key="2">
    <source>
        <dbReference type="SAM" id="MobiDB-lite"/>
    </source>
</evidence>
<evidence type="ECO:0000305" key="3"/>
<name>RL4_LEGPA</name>
<keyword id="KW-0687">Ribonucleoprotein</keyword>
<keyword id="KW-0689">Ribosomal protein</keyword>
<keyword id="KW-0694">RNA-binding</keyword>
<keyword id="KW-0699">rRNA-binding</keyword>
<gene>
    <name evidence="1" type="primary">rplD</name>
    <name type="ordered locus">lpp0395</name>
</gene>
<sequence length="201" mass="22737">MEITTIDTKSKLKLNKEIFAYTYNEGLVHQAVVTFMNNARSGNSAQKTRSEVSGGGKKPWNQKGTGRARAGTIRSPLWRSGGVTFASKKRDYSQKLNKKMYKRALRSIISELCRTGNLMVVSDFQCDNHKTKDFLKKMNQMEISNALIIMSEVGENEYLGSRNLIDYDICDVTTIDPVSLLRFEKVVVTEAAIKKIEEQLQ</sequence>